<sequence>MDLIQQLEQEEIARLAKNIPDFAPGDTVVVNVNVVEGTRKRAQAYEGVVISRRNRGLNSNFIVRKISSGEGVERTFQLYSPLIASIEVKRRGDVRRAKLYYLRERSGKSARIKEKLPQRRVAAKQAAE</sequence>
<dbReference type="EMBL" id="CP000269">
    <property type="protein sequence ID" value="ABR88676.1"/>
    <property type="molecule type" value="Genomic_DNA"/>
</dbReference>
<dbReference type="RefSeq" id="WP_012078458.1">
    <property type="nucleotide sequence ID" value="NC_009659.1"/>
</dbReference>
<dbReference type="SMR" id="A6SVI7"/>
<dbReference type="STRING" id="375286.mma_0594"/>
<dbReference type="KEGG" id="mms:mma_0594"/>
<dbReference type="eggNOG" id="COG0335">
    <property type="taxonomic scope" value="Bacteria"/>
</dbReference>
<dbReference type="HOGENOM" id="CLU_103507_1_0_4"/>
<dbReference type="OrthoDB" id="9803541at2"/>
<dbReference type="Proteomes" id="UP000006388">
    <property type="component" value="Chromosome"/>
</dbReference>
<dbReference type="GO" id="GO:0022625">
    <property type="term" value="C:cytosolic large ribosomal subunit"/>
    <property type="evidence" value="ECO:0007669"/>
    <property type="project" value="TreeGrafter"/>
</dbReference>
<dbReference type="GO" id="GO:0003735">
    <property type="term" value="F:structural constituent of ribosome"/>
    <property type="evidence" value="ECO:0007669"/>
    <property type="project" value="InterPro"/>
</dbReference>
<dbReference type="GO" id="GO:0006412">
    <property type="term" value="P:translation"/>
    <property type="evidence" value="ECO:0007669"/>
    <property type="project" value="UniProtKB-UniRule"/>
</dbReference>
<dbReference type="FunFam" id="2.30.30.790:FF:000001">
    <property type="entry name" value="50S ribosomal protein L19"/>
    <property type="match status" value="1"/>
</dbReference>
<dbReference type="Gene3D" id="2.30.30.790">
    <property type="match status" value="1"/>
</dbReference>
<dbReference type="HAMAP" id="MF_00402">
    <property type="entry name" value="Ribosomal_bL19"/>
    <property type="match status" value="1"/>
</dbReference>
<dbReference type="InterPro" id="IPR001857">
    <property type="entry name" value="Ribosomal_bL19"/>
</dbReference>
<dbReference type="InterPro" id="IPR018257">
    <property type="entry name" value="Ribosomal_bL19_CS"/>
</dbReference>
<dbReference type="InterPro" id="IPR038657">
    <property type="entry name" value="Ribosomal_bL19_sf"/>
</dbReference>
<dbReference type="InterPro" id="IPR008991">
    <property type="entry name" value="Translation_prot_SH3-like_sf"/>
</dbReference>
<dbReference type="NCBIfam" id="TIGR01024">
    <property type="entry name" value="rplS_bact"/>
    <property type="match status" value="1"/>
</dbReference>
<dbReference type="PANTHER" id="PTHR15680:SF9">
    <property type="entry name" value="LARGE RIBOSOMAL SUBUNIT PROTEIN BL19M"/>
    <property type="match status" value="1"/>
</dbReference>
<dbReference type="PANTHER" id="PTHR15680">
    <property type="entry name" value="RIBOSOMAL PROTEIN L19"/>
    <property type="match status" value="1"/>
</dbReference>
<dbReference type="Pfam" id="PF01245">
    <property type="entry name" value="Ribosomal_L19"/>
    <property type="match status" value="1"/>
</dbReference>
<dbReference type="PIRSF" id="PIRSF002191">
    <property type="entry name" value="Ribosomal_L19"/>
    <property type="match status" value="1"/>
</dbReference>
<dbReference type="PRINTS" id="PR00061">
    <property type="entry name" value="RIBOSOMALL19"/>
</dbReference>
<dbReference type="SUPFAM" id="SSF50104">
    <property type="entry name" value="Translation proteins SH3-like domain"/>
    <property type="match status" value="1"/>
</dbReference>
<dbReference type="PROSITE" id="PS01015">
    <property type="entry name" value="RIBOSOMAL_L19"/>
    <property type="match status" value="1"/>
</dbReference>
<accession>A6SVI7</accession>
<evidence type="ECO:0000255" key="1">
    <source>
        <dbReference type="HAMAP-Rule" id="MF_00402"/>
    </source>
</evidence>
<evidence type="ECO:0000305" key="2"/>
<reference key="1">
    <citation type="journal article" date="2007" name="PLoS Genet.">
        <title>Genome analysis of Minibacterium massiliensis highlights the convergent evolution of water-living bacteria.</title>
        <authorList>
            <person name="Audic S."/>
            <person name="Robert C."/>
            <person name="Campagna B."/>
            <person name="Parinello H."/>
            <person name="Claverie J.-M."/>
            <person name="Raoult D."/>
            <person name="Drancourt M."/>
        </authorList>
    </citation>
    <scope>NUCLEOTIDE SEQUENCE [LARGE SCALE GENOMIC DNA]</scope>
    <source>
        <strain>Marseille</strain>
    </source>
</reference>
<organism>
    <name type="scientific">Janthinobacterium sp. (strain Marseille)</name>
    <name type="common">Minibacterium massiliensis</name>
    <dbReference type="NCBI Taxonomy" id="375286"/>
    <lineage>
        <taxon>Bacteria</taxon>
        <taxon>Pseudomonadati</taxon>
        <taxon>Pseudomonadota</taxon>
        <taxon>Betaproteobacteria</taxon>
        <taxon>Burkholderiales</taxon>
        <taxon>Oxalobacteraceae</taxon>
        <taxon>Janthinobacterium</taxon>
    </lineage>
</organism>
<proteinExistence type="inferred from homology"/>
<protein>
    <recommendedName>
        <fullName evidence="1">Large ribosomal subunit protein bL19</fullName>
    </recommendedName>
    <alternativeName>
        <fullName evidence="2">50S ribosomal protein L19</fullName>
    </alternativeName>
</protein>
<feature type="chain" id="PRO_1000049688" description="Large ribosomal subunit protein bL19">
    <location>
        <begin position="1"/>
        <end position="128"/>
    </location>
</feature>
<gene>
    <name evidence="1" type="primary">rplS</name>
    <name type="ordered locus">mma_0594</name>
</gene>
<keyword id="KW-0687">Ribonucleoprotein</keyword>
<keyword id="KW-0689">Ribosomal protein</keyword>
<comment type="function">
    <text evidence="1">This protein is located at the 30S-50S ribosomal subunit interface and may play a role in the structure and function of the aminoacyl-tRNA binding site.</text>
</comment>
<comment type="similarity">
    <text evidence="1">Belongs to the bacterial ribosomal protein bL19 family.</text>
</comment>
<name>RL19_JANMA</name>